<organism>
    <name type="scientific">Yersinia pestis bv. Antiqua (strain Angola)</name>
    <dbReference type="NCBI Taxonomy" id="349746"/>
    <lineage>
        <taxon>Bacteria</taxon>
        <taxon>Pseudomonadati</taxon>
        <taxon>Pseudomonadota</taxon>
        <taxon>Gammaproteobacteria</taxon>
        <taxon>Enterobacterales</taxon>
        <taxon>Yersiniaceae</taxon>
        <taxon>Yersinia</taxon>
    </lineage>
</organism>
<evidence type="ECO:0000255" key="1">
    <source>
        <dbReference type="HAMAP-Rule" id="MF_01682"/>
    </source>
</evidence>
<accession>A9R2Z6</accession>
<dbReference type="EC" id="1.13.11.54" evidence="1"/>
<dbReference type="EC" id="1.13.11.53" evidence="1"/>
<dbReference type="EMBL" id="CP000901">
    <property type="protein sequence ID" value="ABX87745.1"/>
    <property type="molecule type" value="Genomic_DNA"/>
</dbReference>
<dbReference type="RefSeq" id="WP_011191833.1">
    <property type="nucleotide sequence ID" value="NZ_CP009935.1"/>
</dbReference>
<dbReference type="SMR" id="A9R2Z6"/>
<dbReference type="KEGG" id="ypg:YpAngola_A3329"/>
<dbReference type="PATRIC" id="fig|349746.12.peg.28"/>
<dbReference type="UniPathway" id="UPA00904">
    <property type="reaction ID" value="UER00878"/>
</dbReference>
<dbReference type="GO" id="GO:0010308">
    <property type="term" value="F:acireductone dioxygenase (Ni2+-requiring) activity"/>
    <property type="evidence" value="ECO:0007669"/>
    <property type="project" value="UniProtKB-UniRule"/>
</dbReference>
<dbReference type="GO" id="GO:0010309">
    <property type="term" value="F:acireductone dioxygenase [iron(II)-requiring] activity"/>
    <property type="evidence" value="ECO:0007669"/>
    <property type="project" value="UniProtKB-UniRule"/>
</dbReference>
<dbReference type="GO" id="GO:0005506">
    <property type="term" value="F:iron ion binding"/>
    <property type="evidence" value="ECO:0007669"/>
    <property type="project" value="UniProtKB-UniRule"/>
</dbReference>
<dbReference type="GO" id="GO:0016151">
    <property type="term" value="F:nickel cation binding"/>
    <property type="evidence" value="ECO:0007669"/>
    <property type="project" value="UniProtKB-UniRule"/>
</dbReference>
<dbReference type="GO" id="GO:0019509">
    <property type="term" value="P:L-methionine salvage from methylthioadenosine"/>
    <property type="evidence" value="ECO:0007669"/>
    <property type="project" value="UniProtKB-UniRule"/>
</dbReference>
<dbReference type="GO" id="GO:0019284">
    <property type="term" value="P:L-methionine salvage from S-adenosylmethionine"/>
    <property type="evidence" value="ECO:0007669"/>
    <property type="project" value="InterPro"/>
</dbReference>
<dbReference type="CDD" id="cd02232">
    <property type="entry name" value="cupin_ARD"/>
    <property type="match status" value="1"/>
</dbReference>
<dbReference type="Gene3D" id="2.60.120.10">
    <property type="entry name" value="Jelly Rolls"/>
    <property type="match status" value="1"/>
</dbReference>
<dbReference type="HAMAP" id="MF_01682">
    <property type="entry name" value="Salvage_MtnD"/>
    <property type="match status" value="1"/>
</dbReference>
<dbReference type="InterPro" id="IPR004313">
    <property type="entry name" value="ARD"/>
</dbReference>
<dbReference type="InterPro" id="IPR023956">
    <property type="entry name" value="ARD_bac"/>
</dbReference>
<dbReference type="InterPro" id="IPR014710">
    <property type="entry name" value="RmlC-like_jellyroll"/>
</dbReference>
<dbReference type="InterPro" id="IPR011051">
    <property type="entry name" value="RmlC_Cupin_sf"/>
</dbReference>
<dbReference type="PANTHER" id="PTHR23418">
    <property type="entry name" value="ACIREDUCTONE DIOXYGENASE"/>
    <property type="match status" value="1"/>
</dbReference>
<dbReference type="PANTHER" id="PTHR23418:SF0">
    <property type="entry name" value="ACIREDUCTONE DIOXYGENASE"/>
    <property type="match status" value="1"/>
</dbReference>
<dbReference type="Pfam" id="PF03079">
    <property type="entry name" value="ARD"/>
    <property type="match status" value="1"/>
</dbReference>
<dbReference type="SUPFAM" id="SSF51182">
    <property type="entry name" value="RmlC-like cupins"/>
    <property type="match status" value="1"/>
</dbReference>
<protein>
    <recommendedName>
        <fullName evidence="1">Acireductone dioxygenase</fullName>
    </recommendedName>
    <alternativeName>
        <fullName evidence="1">1,2-dihydroxy-3-keto-5-methylthiopentene dioxygenase</fullName>
        <shortName evidence="1">DHK-MTPene dioxygenase</shortName>
    </alternativeName>
    <alternativeName>
        <fullName evidence="1">Acireductone dioxygenase (Fe(2+)-requiring)</fullName>
        <shortName evidence="1">ARD'</shortName>
        <shortName evidence="1">Fe-ARD</shortName>
        <ecNumber evidence="1">1.13.11.54</ecNumber>
    </alternativeName>
    <alternativeName>
        <fullName evidence="1">Acireductone dioxygenase (Ni(2+)-requiring)</fullName>
        <shortName evidence="1">ARD</shortName>
        <shortName evidence="1">Ni-ARD</shortName>
        <ecNumber evidence="1">1.13.11.53</ecNumber>
    </alternativeName>
</protein>
<reference key="1">
    <citation type="journal article" date="2010" name="J. Bacteriol.">
        <title>Genome sequence of the deep-rooted Yersinia pestis strain Angola reveals new insights into the evolution and pangenome of the plague bacterium.</title>
        <authorList>
            <person name="Eppinger M."/>
            <person name="Worsham P.L."/>
            <person name="Nikolich M.P."/>
            <person name="Riley D.R."/>
            <person name="Sebastian Y."/>
            <person name="Mou S."/>
            <person name="Achtman M."/>
            <person name="Lindler L.E."/>
            <person name="Ravel J."/>
        </authorList>
    </citation>
    <scope>NUCLEOTIDE SEQUENCE [LARGE SCALE GENOMIC DNA]</scope>
    <source>
        <strain>Angola</strain>
    </source>
</reference>
<proteinExistence type="inferred from homology"/>
<sequence>MSGLTIFSDQQPEKPLWQSHNAEEIQQQLTAIGVRFERWQADCELGENPQPEAVIAAYQHEIDRLVAENGYKSWDVISMRPDNPQREALREKFLSEHTHGEDEVRFFVEGSGLFCLHLNEKVYQILCEKNDLLSVPADIPHWFDMGSAPNFTAIRVFDNPEGWIARSTGDNIADGYPRLA</sequence>
<name>MTND_YERPG</name>
<gene>
    <name evidence="1" type="primary">mtnD</name>
    <name type="ordered locus">YpAngola_A3329</name>
</gene>
<keyword id="KW-0028">Amino-acid biosynthesis</keyword>
<keyword id="KW-0223">Dioxygenase</keyword>
<keyword id="KW-0408">Iron</keyword>
<keyword id="KW-0479">Metal-binding</keyword>
<keyword id="KW-0486">Methionine biosynthesis</keyword>
<keyword id="KW-0533">Nickel</keyword>
<keyword id="KW-0560">Oxidoreductase</keyword>
<feature type="chain" id="PRO_0000359260" description="Acireductone dioxygenase">
    <location>
        <begin position="1"/>
        <end position="180"/>
    </location>
</feature>
<feature type="binding site" evidence="1">
    <location>
        <position position="97"/>
    </location>
    <ligand>
        <name>Fe(2+)</name>
        <dbReference type="ChEBI" id="CHEBI:29033"/>
    </ligand>
</feature>
<feature type="binding site" evidence="1">
    <location>
        <position position="97"/>
    </location>
    <ligand>
        <name>Ni(2+)</name>
        <dbReference type="ChEBI" id="CHEBI:49786"/>
    </ligand>
</feature>
<feature type="binding site" evidence="1">
    <location>
        <position position="99"/>
    </location>
    <ligand>
        <name>Fe(2+)</name>
        <dbReference type="ChEBI" id="CHEBI:29033"/>
    </ligand>
</feature>
<feature type="binding site" evidence="1">
    <location>
        <position position="99"/>
    </location>
    <ligand>
        <name>Ni(2+)</name>
        <dbReference type="ChEBI" id="CHEBI:49786"/>
    </ligand>
</feature>
<feature type="binding site" evidence="1">
    <location>
        <position position="103"/>
    </location>
    <ligand>
        <name>Fe(2+)</name>
        <dbReference type="ChEBI" id="CHEBI:29033"/>
    </ligand>
</feature>
<feature type="binding site" evidence="1">
    <location>
        <position position="103"/>
    </location>
    <ligand>
        <name>Ni(2+)</name>
        <dbReference type="ChEBI" id="CHEBI:49786"/>
    </ligand>
</feature>
<feature type="binding site" evidence="1">
    <location>
        <position position="141"/>
    </location>
    <ligand>
        <name>Fe(2+)</name>
        <dbReference type="ChEBI" id="CHEBI:29033"/>
    </ligand>
</feature>
<feature type="binding site" evidence="1">
    <location>
        <position position="141"/>
    </location>
    <ligand>
        <name>Ni(2+)</name>
        <dbReference type="ChEBI" id="CHEBI:49786"/>
    </ligand>
</feature>
<feature type="site" description="May play a role in metal incorporation in vivo" evidence="1">
    <location>
        <position position="96"/>
    </location>
</feature>
<feature type="site" description="May play a role in transmitting local conformational changes" evidence="1">
    <location>
        <position position="102"/>
    </location>
</feature>
<feature type="site" description="Important to generate the dianion" evidence="1">
    <location>
        <position position="105"/>
    </location>
</feature>
<comment type="function">
    <text evidence="1">Catalyzes 2 different reactions between oxygen and the acireductone 1,2-dihydroxy-3-keto-5-methylthiopentene (DHK-MTPene) depending upon the metal bound in the active site. Fe-containing acireductone dioxygenase (Fe-ARD) produces formate and 2-keto-4-methylthiobutyrate (KMTB), the alpha-ketoacid precursor of methionine in the methionine recycle pathway. Ni-containing acireductone dioxygenase (Ni-ARD) produces methylthiopropionate, carbon monoxide and formate, and does not lie on the methionine recycle pathway.</text>
</comment>
<comment type="catalytic activity">
    <reaction evidence="1">
        <text>1,2-dihydroxy-5-(methylsulfanyl)pent-1-en-3-one + O2 = 3-(methylsulfanyl)propanoate + CO + formate + 2 H(+)</text>
        <dbReference type="Rhea" id="RHEA:14161"/>
        <dbReference type="ChEBI" id="CHEBI:15378"/>
        <dbReference type="ChEBI" id="CHEBI:15379"/>
        <dbReference type="ChEBI" id="CHEBI:15740"/>
        <dbReference type="ChEBI" id="CHEBI:17245"/>
        <dbReference type="ChEBI" id="CHEBI:49016"/>
        <dbReference type="ChEBI" id="CHEBI:49252"/>
        <dbReference type="EC" id="1.13.11.53"/>
    </reaction>
</comment>
<comment type="catalytic activity">
    <reaction evidence="1">
        <text>1,2-dihydroxy-5-(methylsulfanyl)pent-1-en-3-one + O2 = 4-methylsulfanyl-2-oxobutanoate + formate + 2 H(+)</text>
        <dbReference type="Rhea" id="RHEA:24504"/>
        <dbReference type="ChEBI" id="CHEBI:15378"/>
        <dbReference type="ChEBI" id="CHEBI:15379"/>
        <dbReference type="ChEBI" id="CHEBI:15740"/>
        <dbReference type="ChEBI" id="CHEBI:16723"/>
        <dbReference type="ChEBI" id="CHEBI:49252"/>
        <dbReference type="EC" id="1.13.11.54"/>
    </reaction>
</comment>
<comment type="cofactor">
    <cofactor evidence="1">
        <name>Fe(2+)</name>
        <dbReference type="ChEBI" id="CHEBI:29033"/>
    </cofactor>
    <text evidence="1">Binds 1 Fe(2+) cation per monomer.</text>
</comment>
<comment type="cofactor">
    <cofactor evidence="1">
        <name>Ni(2+)</name>
        <dbReference type="ChEBI" id="CHEBI:49786"/>
    </cofactor>
    <text evidence="1">Binds 1 nickel ion per monomer.</text>
</comment>
<comment type="pathway">
    <text evidence="1">Amino-acid biosynthesis; L-methionine biosynthesis via salvage pathway; L-methionine from S-methyl-5-thio-alpha-D-ribose 1-phosphate: step 5/6.</text>
</comment>
<comment type="subunit">
    <text evidence="1">Monomer.</text>
</comment>
<comment type="similarity">
    <text evidence="1">Belongs to the acireductone dioxygenase (ARD) family.</text>
</comment>